<evidence type="ECO:0000255" key="1">
    <source>
        <dbReference type="HAMAP-Rule" id="MF_00125"/>
    </source>
</evidence>
<keyword id="KW-0028">Amino-acid biosynthesis</keyword>
<keyword id="KW-0963">Cytoplasm</keyword>
<keyword id="KW-0368">Histidine biosynthesis</keyword>
<keyword id="KW-1185">Reference proteome</keyword>
<proteinExistence type="inferred from homology"/>
<reference key="1">
    <citation type="journal article" date="2005" name="PLoS Genet.">
        <title>Life in hot carbon monoxide: the complete genome sequence of Carboxydothermus hydrogenoformans Z-2901.</title>
        <authorList>
            <person name="Wu M."/>
            <person name="Ren Q."/>
            <person name="Durkin A.S."/>
            <person name="Daugherty S.C."/>
            <person name="Brinkac L.M."/>
            <person name="Dodson R.J."/>
            <person name="Madupu R."/>
            <person name="Sullivan S.A."/>
            <person name="Kolonay J.F."/>
            <person name="Nelson W.C."/>
            <person name="Tallon L.J."/>
            <person name="Jones K.M."/>
            <person name="Ulrich L.E."/>
            <person name="Gonzalez J.M."/>
            <person name="Zhulin I.B."/>
            <person name="Robb F.T."/>
            <person name="Eisen J.A."/>
        </authorList>
    </citation>
    <scope>NUCLEOTIDE SEQUENCE [LARGE SCALE GENOMIC DNA]</scope>
    <source>
        <strain>ATCC BAA-161 / DSM 6008 / Z-2901</strain>
    </source>
</reference>
<protein>
    <recommendedName>
        <fullName evidence="1">ATP phosphoribosyltransferase regulatory subunit</fullName>
    </recommendedName>
</protein>
<gene>
    <name evidence="1" type="primary">hisZ</name>
    <name type="ordered locus">CHY_1083</name>
</gene>
<name>HISZ_CARHZ</name>
<organism>
    <name type="scientific">Carboxydothermus hydrogenoformans (strain ATCC BAA-161 / DSM 6008 / Z-2901)</name>
    <dbReference type="NCBI Taxonomy" id="246194"/>
    <lineage>
        <taxon>Bacteria</taxon>
        <taxon>Bacillati</taxon>
        <taxon>Bacillota</taxon>
        <taxon>Clostridia</taxon>
        <taxon>Thermoanaerobacterales</taxon>
        <taxon>Thermoanaerobacteraceae</taxon>
        <taxon>Carboxydothermus</taxon>
    </lineage>
</organism>
<dbReference type="EMBL" id="CP000141">
    <property type="protein sequence ID" value="ABB15093.1"/>
    <property type="molecule type" value="Genomic_DNA"/>
</dbReference>
<dbReference type="RefSeq" id="WP_011344005.1">
    <property type="nucleotide sequence ID" value="NC_007503.1"/>
</dbReference>
<dbReference type="SMR" id="Q3AD55"/>
<dbReference type="FunCoup" id="Q3AD55">
    <property type="interactions" value="95"/>
</dbReference>
<dbReference type="STRING" id="246194.CHY_1083"/>
<dbReference type="KEGG" id="chy:CHY_1083"/>
<dbReference type="eggNOG" id="COG3705">
    <property type="taxonomic scope" value="Bacteria"/>
</dbReference>
<dbReference type="HOGENOM" id="CLU_025113_0_2_9"/>
<dbReference type="InParanoid" id="Q3AD55"/>
<dbReference type="OrthoDB" id="9800814at2"/>
<dbReference type="UniPathway" id="UPA00031">
    <property type="reaction ID" value="UER00006"/>
</dbReference>
<dbReference type="Proteomes" id="UP000002706">
    <property type="component" value="Chromosome"/>
</dbReference>
<dbReference type="GO" id="GO:0005737">
    <property type="term" value="C:cytoplasm"/>
    <property type="evidence" value="ECO:0007669"/>
    <property type="project" value="UniProtKB-SubCell"/>
</dbReference>
<dbReference type="GO" id="GO:0140096">
    <property type="term" value="F:catalytic activity, acting on a protein"/>
    <property type="evidence" value="ECO:0007669"/>
    <property type="project" value="UniProtKB-ARBA"/>
</dbReference>
<dbReference type="GO" id="GO:0004821">
    <property type="term" value="F:histidine-tRNA ligase activity"/>
    <property type="evidence" value="ECO:0007669"/>
    <property type="project" value="TreeGrafter"/>
</dbReference>
<dbReference type="GO" id="GO:0016740">
    <property type="term" value="F:transferase activity"/>
    <property type="evidence" value="ECO:0007669"/>
    <property type="project" value="UniProtKB-ARBA"/>
</dbReference>
<dbReference type="GO" id="GO:0006427">
    <property type="term" value="P:histidyl-tRNA aminoacylation"/>
    <property type="evidence" value="ECO:0007669"/>
    <property type="project" value="TreeGrafter"/>
</dbReference>
<dbReference type="GO" id="GO:0000105">
    <property type="term" value="P:L-histidine biosynthetic process"/>
    <property type="evidence" value="ECO:0007669"/>
    <property type="project" value="UniProtKB-UniRule"/>
</dbReference>
<dbReference type="CDD" id="cd00773">
    <property type="entry name" value="HisRS-like_core"/>
    <property type="match status" value="1"/>
</dbReference>
<dbReference type="Gene3D" id="3.30.930.10">
    <property type="entry name" value="Bira Bifunctional Protein, Domain 2"/>
    <property type="match status" value="1"/>
</dbReference>
<dbReference type="HAMAP" id="MF_00125">
    <property type="entry name" value="HisZ"/>
    <property type="match status" value="1"/>
</dbReference>
<dbReference type="InterPro" id="IPR006195">
    <property type="entry name" value="aa-tRNA-synth_II"/>
</dbReference>
<dbReference type="InterPro" id="IPR045864">
    <property type="entry name" value="aa-tRNA-synth_II/BPL/LPL"/>
</dbReference>
<dbReference type="InterPro" id="IPR041715">
    <property type="entry name" value="HisRS-like_core"/>
</dbReference>
<dbReference type="InterPro" id="IPR004516">
    <property type="entry name" value="HisRS/HisZ"/>
</dbReference>
<dbReference type="InterPro" id="IPR004517">
    <property type="entry name" value="HisZ"/>
</dbReference>
<dbReference type="NCBIfam" id="TIGR00443">
    <property type="entry name" value="hisZ_biosyn_reg"/>
    <property type="match status" value="1"/>
</dbReference>
<dbReference type="PANTHER" id="PTHR43707:SF1">
    <property type="entry name" value="HISTIDINE--TRNA LIGASE, MITOCHONDRIAL-RELATED"/>
    <property type="match status" value="1"/>
</dbReference>
<dbReference type="PANTHER" id="PTHR43707">
    <property type="entry name" value="HISTIDYL-TRNA SYNTHETASE"/>
    <property type="match status" value="1"/>
</dbReference>
<dbReference type="Pfam" id="PF13393">
    <property type="entry name" value="tRNA-synt_His"/>
    <property type="match status" value="1"/>
</dbReference>
<dbReference type="PIRSF" id="PIRSF001549">
    <property type="entry name" value="His-tRNA_synth"/>
    <property type="match status" value="1"/>
</dbReference>
<dbReference type="SUPFAM" id="SSF55681">
    <property type="entry name" value="Class II aaRS and biotin synthetases"/>
    <property type="match status" value="1"/>
</dbReference>
<dbReference type="PROSITE" id="PS50862">
    <property type="entry name" value="AA_TRNA_LIGASE_II"/>
    <property type="match status" value="1"/>
</dbReference>
<comment type="function">
    <text evidence="1">Required for the first step of histidine biosynthesis. May allow the feedback regulation of ATP phosphoribosyltransferase activity by histidine.</text>
</comment>
<comment type="pathway">
    <text evidence="1">Amino-acid biosynthesis; L-histidine biosynthesis; L-histidine from 5-phospho-alpha-D-ribose 1-diphosphate: step 1/9.</text>
</comment>
<comment type="subunit">
    <text evidence="1">Heteromultimer composed of HisG and HisZ subunits.</text>
</comment>
<comment type="subcellular location">
    <subcellularLocation>
        <location evidence="1">Cytoplasm</location>
    </subcellularLocation>
</comment>
<comment type="miscellaneous">
    <text>This function is generally fulfilled by the C-terminal part of HisG, which is missing in some bacteria such as this one.</text>
</comment>
<comment type="similarity">
    <text evidence="1">Belongs to the class-II aminoacyl-tRNA synthetase family. HisZ subfamily.</text>
</comment>
<accession>Q3AD55</accession>
<sequence length="324" mass="37040">MRENFKELPMGVRDYLPGEAALRRYLENLFVELVAKEGFQEVITPSFEYYETLRESSETDLIKFVDRTGELLALRGDMTTPIARVVSTKMKHRELPLKIFYAATVFSGNFSGRNKLREFKQLGIEVFGDITSKLESDLIKLMAVYLRKAKVKNLEISLGHVDILTGLIEEYELFNHFSEIKNALNQKDYVALEGIFERAGKSQRVRESLVDFLQQRGGKAILRKAKKMLSHPKAKKALEELEEVTEYLISEGVRELKLDFSLVRDLNYYTGLVFEAYTPYLGYPLGGGGRYDTLLKKFGWDTPAFGFALGLERIVESIANSIDK</sequence>
<feature type="chain" id="PRO_0000242831" description="ATP phosphoribosyltransferase regulatory subunit">
    <location>
        <begin position="1"/>
        <end position="324"/>
    </location>
</feature>